<gene>
    <name evidence="4" type="primary">phrA</name>
    <name evidence="7" type="ordered locus">Atu1218</name>
</gene>
<keyword id="KW-0002">3D-structure</keyword>
<keyword id="KW-0157">Chromophore</keyword>
<keyword id="KW-0227">DNA damage</keyword>
<keyword id="KW-0234">DNA repair</keyword>
<keyword id="KW-0238">DNA-binding</keyword>
<keyword id="KW-0274">FAD</keyword>
<keyword id="KW-0285">Flavoprotein</keyword>
<keyword id="KW-0456">Lyase</keyword>
<keyword id="KW-1185">Reference proteome</keyword>
<accession>A9CJC9</accession>
<dbReference type="EC" id="4.1.99.3" evidence="3"/>
<dbReference type="EMBL" id="AE007869">
    <property type="protein sequence ID" value="AAK87020.1"/>
    <property type="molecule type" value="Genomic_DNA"/>
</dbReference>
<dbReference type="PIR" id="AG2726">
    <property type="entry name" value="AG2726"/>
</dbReference>
<dbReference type="PIR" id="C97508">
    <property type="entry name" value="C97508"/>
</dbReference>
<dbReference type="RefSeq" id="NP_354235.1">
    <property type="nucleotide sequence ID" value="NC_003062.2"/>
</dbReference>
<dbReference type="RefSeq" id="WP_010971478.1">
    <property type="nucleotide sequence ID" value="NC_003062.2"/>
</dbReference>
<dbReference type="PDB" id="4U63">
    <property type="method" value="X-ray"/>
    <property type="resolution" value="1.67 A"/>
    <property type="chains" value="A=2-479"/>
</dbReference>
<dbReference type="PDBsum" id="4U63"/>
<dbReference type="SMR" id="A9CJC9"/>
<dbReference type="STRING" id="176299.Atu1218"/>
<dbReference type="EnsemblBacteria" id="AAK87020">
    <property type="protein sequence ID" value="AAK87020"/>
    <property type="gene ID" value="Atu1218"/>
</dbReference>
<dbReference type="GeneID" id="1133256"/>
<dbReference type="KEGG" id="atu:Atu1218"/>
<dbReference type="PATRIC" id="fig|176299.10.peg.1239"/>
<dbReference type="eggNOG" id="COG0415">
    <property type="taxonomic scope" value="Bacteria"/>
</dbReference>
<dbReference type="HOGENOM" id="CLU_010348_2_2_5"/>
<dbReference type="OrthoDB" id="9772484at2"/>
<dbReference type="PhylomeDB" id="A9CJC9"/>
<dbReference type="BioCyc" id="AGRO:ATU1218-MONOMER"/>
<dbReference type="EvolutionaryTrace" id="A9CJC9"/>
<dbReference type="Proteomes" id="UP000000813">
    <property type="component" value="Chromosome circular"/>
</dbReference>
<dbReference type="GO" id="GO:0003904">
    <property type="term" value="F:deoxyribodipyrimidine photo-lyase activity"/>
    <property type="evidence" value="ECO:0000314"/>
    <property type="project" value="UniProtKB"/>
</dbReference>
<dbReference type="GO" id="GO:0003677">
    <property type="term" value="F:DNA binding"/>
    <property type="evidence" value="ECO:0007669"/>
    <property type="project" value="UniProtKB-KW"/>
</dbReference>
<dbReference type="GO" id="GO:0071949">
    <property type="term" value="F:FAD binding"/>
    <property type="evidence" value="ECO:0000314"/>
    <property type="project" value="UniProtKB"/>
</dbReference>
<dbReference type="GO" id="GO:0000719">
    <property type="term" value="P:photoreactive repair"/>
    <property type="evidence" value="ECO:0000315"/>
    <property type="project" value="UniProtKB"/>
</dbReference>
<dbReference type="GO" id="GO:0009416">
    <property type="term" value="P:response to light stimulus"/>
    <property type="evidence" value="ECO:0007669"/>
    <property type="project" value="TreeGrafter"/>
</dbReference>
<dbReference type="FunFam" id="1.10.579.10:FF:000003">
    <property type="entry name" value="Deoxyribodipyrimidine photo-lyase"/>
    <property type="match status" value="1"/>
</dbReference>
<dbReference type="Gene3D" id="1.25.40.80">
    <property type="match status" value="1"/>
</dbReference>
<dbReference type="Gene3D" id="1.10.579.10">
    <property type="entry name" value="DNA Cyclobutane Dipyrimidine Photolyase, subunit A, domain 3"/>
    <property type="match status" value="1"/>
</dbReference>
<dbReference type="Gene3D" id="3.40.50.620">
    <property type="entry name" value="HUPs"/>
    <property type="match status" value="1"/>
</dbReference>
<dbReference type="InterPro" id="IPR036134">
    <property type="entry name" value="Crypto/Photolyase_FAD-like_sf"/>
</dbReference>
<dbReference type="InterPro" id="IPR036155">
    <property type="entry name" value="Crypto/Photolyase_N_sf"/>
</dbReference>
<dbReference type="InterPro" id="IPR005101">
    <property type="entry name" value="Cryptochr/Photolyase_FAD-bd"/>
</dbReference>
<dbReference type="InterPro" id="IPR002081">
    <property type="entry name" value="Cryptochrome/DNA_photolyase_1"/>
</dbReference>
<dbReference type="InterPro" id="IPR018394">
    <property type="entry name" value="DNA_photolyase_1_CS_C"/>
</dbReference>
<dbReference type="InterPro" id="IPR006050">
    <property type="entry name" value="DNA_photolyase_N"/>
</dbReference>
<dbReference type="InterPro" id="IPR014729">
    <property type="entry name" value="Rossmann-like_a/b/a_fold"/>
</dbReference>
<dbReference type="PANTHER" id="PTHR11455">
    <property type="entry name" value="CRYPTOCHROME"/>
    <property type="match status" value="1"/>
</dbReference>
<dbReference type="PANTHER" id="PTHR11455:SF9">
    <property type="entry name" value="CRYPTOCHROME CIRCADIAN CLOCK 5 ISOFORM X1"/>
    <property type="match status" value="1"/>
</dbReference>
<dbReference type="Pfam" id="PF00875">
    <property type="entry name" value="DNA_photolyase"/>
    <property type="match status" value="1"/>
</dbReference>
<dbReference type="Pfam" id="PF03441">
    <property type="entry name" value="FAD_binding_7"/>
    <property type="match status" value="1"/>
</dbReference>
<dbReference type="PRINTS" id="PR00147">
    <property type="entry name" value="DNAPHOTLYASE"/>
</dbReference>
<dbReference type="SUPFAM" id="SSF48173">
    <property type="entry name" value="Cryptochrome/photolyase FAD-binding domain"/>
    <property type="match status" value="1"/>
</dbReference>
<dbReference type="SUPFAM" id="SSF52425">
    <property type="entry name" value="Cryptochrome/photolyase, N-terminal domain"/>
    <property type="match status" value="1"/>
</dbReference>
<dbReference type="PROSITE" id="PS00394">
    <property type="entry name" value="DNA_PHOTOLYASES_1_1"/>
    <property type="match status" value="1"/>
</dbReference>
<dbReference type="PROSITE" id="PS00691">
    <property type="entry name" value="DNA_PHOTOLYASES_1_2"/>
    <property type="match status" value="1"/>
</dbReference>
<dbReference type="PROSITE" id="PS51645">
    <property type="entry name" value="PHR_CRY_ALPHA_BETA"/>
    <property type="match status" value="1"/>
</dbReference>
<organism>
    <name type="scientific">Agrobacterium fabrum (strain C58 / ATCC 33970)</name>
    <name type="common">Agrobacterium tumefaciens (strain C58)</name>
    <dbReference type="NCBI Taxonomy" id="176299"/>
    <lineage>
        <taxon>Bacteria</taxon>
        <taxon>Pseudomonadati</taxon>
        <taxon>Pseudomonadota</taxon>
        <taxon>Alphaproteobacteria</taxon>
        <taxon>Hyphomicrobiales</taxon>
        <taxon>Rhizobiaceae</taxon>
        <taxon>Rhizobium/Agrobacterium group</taxon>
        <taxon>Agrobacterium</taxon>
        <taxon>Agrobacterium tumefaciens complex</taxon>
    </lineage>
</organism>
<reference key="1">
    <citation type="journal article" date="2001" name="Science">
        <title>The genome of the natural genetic engineer Agrobacterium tumefaciens C58.</title>
        <authorList>
            <person name="Wood D.W."/>
            <person name="Setubal J.C."/>
            <person name="Kaul R."/>
            <person name="Monks D.E."/>
            <person name="Kitajima J.P."/>
            <person name="Okura V.K."/>
            <person name="Zhou Y."/>
            <person name="Chen L."/>
            <person name="Wood G.E."/>
            <person name="Almeida N.F. Jr."/>
            <person name="Woo L."/>
            <person name="Chen Y."/>
            <person name="Paulsen I.T."/>
            <person name="Eisen J.A."/>
            <person name="Karp P.D."/>
            <person name="Bovee D. Sr."/>
            <person name="Chapman P."/>
            <person name="Clendenning J."/>
            <person name="Deatherage G."/>
            <person name="Gillet W."/>
            <person name="Grant C."/>
            <person name="Kutyavin T."/>
            <person name="Levy R."/>
            <person name="Li M.-J."/>
            <person name="McClelland E."/>
            <person name="Palmieri A."/>
            <person name="Raymond C."/>
            <person name="Rouse G."/>
            <person name="Saenphimmachak C."/>
            <person name="Wu Z."/>
            <person name="Romero P."/>
            <person name="Gordon D."/>
            <person name="Zhang S."/>
            <person name="Yoo H."/>
            <person name="Tao Y."/>
            <person name="Biddle P."/>
            <person name="Jung M."/>
            <person name="Krespan W."/>
            <person name="Perry M."/>
            <person name="Gordon-Kamm B."/>
            <person name="Liao L."/>
            <person name="Kim S."/>
            <person name="Hendrick C."/>
            <person name="Zhao Z.-Y."/>
            <person name="Dolan M."/>
            <person name="Chumley F."/>
            <person name="Tingey S.V."/>
            <person name="Tomb J.-F."/>
            <person name="Gordon M.P."/>
            <person name="Olson M.V."/>
            <person name="Nester E.W."/>
        </authorList>
    </citation>
    <scope>NUCLEOTIDE SEQUENCE [LARGE SCALE GENOMIC DNA]</scope>
    <source>
        <strain>C58 / ATCC 33970</strain>
    </source>
</reference>
<reference key="2">
    <citation type="journal article" date="2001" name="Science">
        <title>Genome sequence of the plant pathogen and biotechnology agent Agrobacterium tumefaciens C58.</title>
        <authorList>
            <person name="Goodner B."/>
            <person name="Hinkle G."/>
            <person name="Gattung S."/>
            <person name="Miller N."/>
            <person name="Blanchard M."/>
            <person name="Qurollo B."/>
            <person name="Goldman B.S."/>
            <person name="Cao Y."/>
            <person name="Askenazi M."/>
            <person name="Halling C."/>
            <person name="Mullin L."/>
            <person name="Houmiel K."/>
            <person name="Gordon J."/>
            <person name="Vaudin M."/>
            <person name="Iartchouk O."/>
            <person name="Epp A."/>
            <person name="Liu F."/>
            <person name="Wollam C."/>
            <person name="Allinger M."/>
            <person name="Doughty D."/>
            <person name="Scott C."/>
            <person name="Lappas C."/>
            <person name="Markelz B."/>
            <person name="Flanagan C."/>
            <person name="Crowell C."/>
            <person name="Gurson J."/>
            <person name="Lomo C."/>
            <person name="Sear C."/>
            <person name="Strub G."/>
            <person name="Cielo C."/>
            <person name="Slater S."/>
        </authorList>
    </citation>
    <scope>NUCLEOTIDE SEQUENCE [LARGE SCALE GENOMIC DNA]</scope>
    <source>
        <strain>C58 / ATCC 33970</strain>
    </source>
</reference>
<reference key="3">
    <citation type="journal article" date="2011" name="PLoS ONE">
        <title>A photolyase-like protein from Agrobacterium tumefaciens with an iron-sulfur cluster.</title>
        <authorList>
            <person name="Oberpichler I."/>
            <person name="Pierik A.J."/>
            <person name="Wesslowski J."/>
            <person name="Pokorny R."/>
            <person name="Rosen R."/>
            <person name="Vugman M."/>
            <person name="Zhang F."/>
            <person name="Neubauer O."/>
            <person name="Ron E.Z."/>
            <person name="Batschauer A."/>
            <person name="Lamparter T."/>
        </authorList>
    </citation>
    <scope>FUNCTION</scope>
    <scope>CATALYTIC ACTIVITY</scope>
    <scope>COFACTOR</scope>
    <scope>DISRUPTION PHENOTYPE</scope>
    <source>
        <strain>C58 / ATCC 33970</strain>
    </source>
</reference>
<comment type="function">
    <text evidence="3">Photolyase involved in the repair of UV radiation-induced DNA damage. By using blue-light energy, catalyzes the photoreactivation of cyclobutane pyrimidine dimers (CPDs), which are formed between adjacent bases on the same DNA strand upon exposure to ultraviolet radiation. Can repair CPD lesions in ssDNA as well as in dsDNA.</text>
</comment>
<comment type="catalytic activity">
    <reaction evidence="3">
        <text>cyclobutadipyrimidine (in DNA) = 2 pyrimidine residues (in DNA).</text>
        <dbReference type="EC" id="4.1.99.3"/>
    </reaction>
</comment>
<comment type="cofactor">
    <cofactor evidence="3">
        <name>FAD</name>
        <dbReference type="ChEBI" id="CHEBI:57692"/>
    </cofactor>
    <text evidence="3">Binds 1 FAD per subunit.</text>
</comment>
<comment type="cofactor">
    <cofactor evidence="3">
        <name>(6R)-5,10-methylene-5,6,7,8-tetrahydrofolate</name>
        <dbReference type="ChEBI" id="CHEBI:15636"/>
    </cofactor>
    <text evidence="3">Binds 1 5,10-methenyltetrahydrofolate (MTHF) per subunit, that serves as photoantenna.</text>
</comment>
<comment type="disruption phenotype">
    <text evidence="3">Cells lacking this gene show an attenuated photoreactivation after treatment with UV-B irradiation.</text>
</comment>
<comment type="similarity">
    <text evidence="6">Belongs to the DNA photolyase class-3 family.</text>
</comment>
<sequence length="479" mass="53885">MSLKTAPVIVWFRKDLRLSDNLALLAAVEHGGPVIPVYIREKSAGPLGGAQEWWLHHSLAALSSSLEKAGGRLVLASGDAERILRDLISETGADTVVWNRRYDPTGMATDKALKQKLRDDGLTVRSFSGQLLHEPSRLQTKSGGPYRVYTPFWRALEGSDEPHAPADPPKSLTAPKVWPKSEKLSNWKLLPTKPDWAKDFSDIWTPGETGALDKLDDFIDGALKGYEEGRDFPAKPATSLLSPHLAAGEISPAAVWHATKGLSRHIASNDISRFRKEIVWREFCYHLLFHFPELGEKNWNDSFDAFSWRDDEKSFKAWTRGMTGYPIVDAGMRQLWQHGTMHNRVRMIVASFLIKHLLIDWRKGEKWFRDTLVDADPASNAANWQWVAGSGADASPFFRIFNPILQGEKFDGDGDYVRRFVPELEKLERKYIHKPFEAPKDALKKAGVELGKTYPLPIVDHGKARERALAAYAAVKKTT</sequence>
<protein>
    <recommendedName>
        <fullName evidence="5">Deoxyribodipyrimidine photo-lyase</fullName>
        <ecNumber evidence="3">4.1.99.3</ecNumber>
    </recommendedName>
    <alternativeName>
        <fullName evidence="6">Cyclobutane pyrimidine dimer photolyase</fullName>
        <shortName evidence="6">CPD photolyase</shortName>
    </alternativeName>
    <alternativeName>
        <fullName evidence="4">DNA photolyase PhrA</fullName>
    </alternativeName>
    <alternativeName>
        <fullName>Photoreactivating enzyme PhrA</fullName>
    </alternativeName>
</protein>
<feature type="chain" id="PRO_0000431764" description="Deoxyribodipyrimidine photo-lyase">
    <location>
        <begin position="1"/>
        <end position="479"/>
    </location>
</feature>
<feature type="domain" description="Photolyase/cryptochrome alpha/beta" evidence="5">
    <location>
        <begin position="6"/>
        <end position="132"/>
    </location>
</feature>
<feature type="region of interest" description="Interaction with DNA" evidence="1">
    <location>
        <begin position="277"/>
        <end position="284"/>
    </location>
</feature>
<feature type="region of interest" description="Interaction with DNA" evidence="1">
    <location>
        <begin position="343"/>
        <end position="344"/>
    </location>
</feature>
<feature type="binding site" evidence="2">
    <location>
        <position position="226"/>
    </location>
    <ligand>
        <name>FAD</name>
        <dbReference type="ChEBI" id="CHEBI:57692"/>
    </ligand>
</feature>
<feature type="binding site" evidence="1">
    <location>
        <position position="230"/>
    </location>
    <ligand>
        <name>DNA</name>
        <dbReference type="ChEBI" id="CHEBI:16991"/>
    </ligand>
</feature>
<feature type="binding site" evidence="2">
    <location>
        <begin position="238"/>
        <end position="242"/>
    </location>
    <ligand>
        <name>FAD</name>
        <dbReference type="ChEBI" id="CHEBI:57692"/>
    </ligand>
</feature>
<feature type="binding site" evidence="2">
    <location>
        <begin position="277"/>
        <end position="284"/>
    </location>
    <ligand>
        <name>FAD</name>
        <dbReference type="ChEBI" id="CHEBI:57692"/>
    </ligand>
</feature>
<feature type="binding site" evidence="2">
    <location>
        <begin position="374"/>
        <end position="376"/>
    </location>
    <ligand>
        <name>FAD</name>
        <dbReference type="ChEBI" id="CHEBI:57692"/>
    </ligand>
</feature>
<feature type="binding site" evidence="1">
    <location>
        <position position="406"/>
    </location>
    <ligand>
        <name>DNA</name>
        <dbReference type="ChEBI" id="CHEBI:16991"/>
    </ligand>
</feature>
<feature type="site" description="Electron transfer via tryptophanyl radical" evidence="2">
    <location>
        <position position="308"/>
    </location>
</feature>
<feature type="site" description="Electron transfer via tryptophanyl radical" evidence="2">
    <location>
        <position position="361"/>
    </location>
</feature>
<feature type="site" description="Electron transfer via tryptophanyl radical" evidence="2">
    <location>
        <position position="384"/>
    </location>
</feature>
<feature type="strand" evidence="8">
    <location>
        <begin position="8"/>
        <end position="14"/>
    </location>
</feature>
<feature type="helix" evidence="8">
    <location>
        <begin position="22"/>
        <end position="30"/>
    </location>
</feature>
<feature type="strand" evidence="8">
    <location>
        <begin position="34"/>
        <end position="40"/>
    </location>
</feature>
<feature type="strand" evidence="8">
    <location>
        <begin position="42"/>
        <end position="45"/>
    </location>
</feature>
<feature type="helix" evidence="8">
    <location>
        <begin position="49"/>
        <end position="68"/>
    </location>
</feature>
<feature type="strand" evidence="8">
    <location>
        <begin position="74"/>
        <end position="78"/>
    </location>
</feature>
<feature type="helix" evidence="8">
    <location>
        <begin position="80"/>
        <end position="91"/>
    </location>
</feature>
<feature type="strand" evidence="8">
    <location>
        <begin position="95"/>
        <end position="99"/>
    </location>
</feature>
<feature type="helix" evidence="8">
    <location>
        <begin position="104"/>
        <end position="119"/>
    </location>
</feature>
<feature type="strand" evidence="8">
    <location>
        <begin position="123"/>
        <end position="127"/>
    </location>
</feature>
<feature type="turn" evidence="8">
    <location>
        <begin position="135"/>
        <end position="137"/>
    </location>
</feature>
<feature type="helix" evidence="8">
    <location>
        <begin position="149"/>
        <end position="158"/>
    </location>
</feature>
<feature type="helix" evidence="8">
    <location>
        <begin position="184"/>
        <end position="187"/>
    </location>
</feature>
<feature type="turn" evidence="8">
    <location>
        <begin position="196"/>
        <end position="199"/>
    </location>
</feature>
<feature type="helix" evidence="8">
    <location>
        <begin position="200"/>
        <end position="203"/>
    </location>
</feature>
<feature type="helix" evidence="8">
    <location>
        <begin position="208"/>
        <end position="219"/>
    </location>
</feature>
<feature type="turn" evidence="8">
    <location>
        <begin position="220"/>
        <end position="225"/>
    </location>
</feature>
<feature type="helix" evidence="8">
    <location>
        <begin position="226"/>
        <end position="229"/>
    </location>
</feature>
<feature type="helix" evidence="8">
    <location>
        <begin position="242"/>
        <end position="246"/>
    </location>
</feature>
<feature type="helix" evidence="8">
    <location>
        <begin position="252"/>
        <end position="257"/>
    </location>
</feature>
<feature type="turn" evidence="8">
    <location>
        <begin position="258"/>
        <end position="261"/>
    </location>
</feature>
<feature type="turn" evidence="8">
    <location>
        <begin position="263"/>
        <end position="265"/>
    </location>
</feature>
<feature type="helix" evidence="8">
    <location>
        <begin position="268"/>
        <end position="290"/>
    </location>
</feature>
<feature type="turn" evidence="8">
    <location>
        <begin position="292"/>
        <end position="296"/>
    </location>
</feature>
<feature type="helix" evidence="8">
    <location>
        <begin position="301"/>
        <end position="303"/>
    </location>
</feature>
<feature type="helix" evidence="8">
    <location>
        <begin position="312"/>
        <end position="319"/>
    </location>
</feature>
<feature type="helix" evidence="8">
    <location>
        <begin position="326"/>
        <end position="338"/>
    </location>
</feature>
<feature type="helix" evidence="8">
    <location>
        <begin position="343"/>
        <end position="354"/>
    </location>
</feature>
<feature type="helix" evidence="8">
    <location>
        <begin position="361"/>
        <end position="371"/>
    </location>
</feature>
<feature type="helix" evidence="8">
    <location>
        <begin position="379"/>
        <end position="388"/>
    </location>
</feature>
<feature type="helix" evidence="8">
    <location>
        <begin position="403"/>
        <end position="410"/>
    </location>
</feature>
<feature type="helix" evidence="8">
    <location>
        <begin position="415"/>
        <end position="420"/>
    </location>
</feature>
<feature type="helix" evidence="8">
    <location>
        <begin position="422"/>
        <end position="424"/>
    </location>
</feature>
<feature type="helix" evidence="8">
    <location>
        <begin position="429"/>
        <end position="432"/>
    </location>
</feature>
<feature type="helix" evidence="8">
    <location>
        <begin position="435"/>
        <end position="437"/>
    </location>
</feature>
<feature type="helix" evidence="8">
    <location>
        <begin position="440"/>
        <end position="446"/>
    </location>
</feature>
<feature type="turn" evidence="8">
    <location>
        <begin position="450"/>
        <end position="452"/>
    </location>
</feature>
<feature type="helix" evidence="8">
    <location>
        <begin position="461"/>
        <end position="476"/>
    </location>
</feature>
<name>PHRA_AGRFC</name>
<proteinExistence type="evidence at protein level"/>
<evidence type="ECO:0000250" key="1"/>
<evidence type="ECO:0000250" key="2">
    <source>
        <dbReference type="UniProtKB" id="P00914"/>
    </source>
</evidence>
<evidence type="ECO:0000269" key="3">
    <source>
    </source>
</evidence>
<evidence type="ECO:0000303" key="4">
    <source>
    </source>
</evidence>
<evidence type="ECO:0000305" key="5"/>
<evidence type="ECO:0000305" key="6">
    <source>
    </source>
</evidence>
<evidence type="ECO:0000312" key="7">
    <source>
        <dbReference type="EMBL" id="AAK87020.1"/>
    </source>
</evidence>
<evidence type="ECO:0007829" key="8">
    <source>
        <dbReference type="PDB" id="4U63"/>
    </source>
</evidence>